<protein>
    <recommendedName>
        <fullName evidence="8">Thioredoxin 2</fullName>
        <shortName evidence="8">PbTRX2</shortName>
    </recommendedName>
</protein>
<proteinExistence type="evidence at protein level"/>
<dbReference type="EMBL" id="LK023128">
    <property type="protein sequence ID" value="VUC57967.1"/>
    <property type="molecule type" value="Genomic_DNA"/>
</dbReference>
<dbReference type="SMR" id="A0A509AQW5"/>
<dbReference type="STRING" id="5823.A0A509AQW5"/>
<dbReference type="VEuPathDB" id="PlasmoDB:PBANKA_1358000"/>
<dbReference type="InParanoid" id="A0A509AQW5"/>
<dbReference type="OMA" id="CHACKMQ"/>
<dbReference type="Proteomes" id="UP000074855">
    <property type="component" value="Chromosome 13"/>
</dbReference>
<dbReference type="GO" id="GO:0005737">
    <property type="term" value="C:cytoplasm"/>
    <property type="evidence" value="ECO:0007669"/>
    <property type="project" value="TreeGrafter"/>
</dbReference>
<dbReference type="GO" id="GO:0015035">
    <property type="term" value="F:protein-disulfide reductase activity"/>
    <property type="evidence" value="ECO:0007669"/>
    <property type="project" value="TreeGrafter"/>
</dbReference>
<dbReference type="CDD" id="cd02947">
    <property type="entry name" value="TRX_family"/>
    <property type="match status" value="1"/>
</dbReference>
<dbReference type="FunFam" id="3.40.30.10:FF:000405">
    <property type="entry name" value="Thioredoxin 2"/>
    <property type="match status" value="1"/>
</dbReference>
<dbReference type="Gene3D" id="3.40.30.10">
    <property type="entry name" value="Glutaredoxin"/>
    <property type="match status" value="1"/>
</dbReference>
<dbReference type="InterPro" id="IPR036249">
    <property type="entry name" value="Thioredoxin-like_sf"/>
</dbReference>
<dbReference type="InterPro" id="IPR013766">
    <property type="entry name" value="Thioredoxin_domain"/>
</dbReference>
<dbReference type="PANTHER" id="PTHR45663">
    <property type="entry name" value="GEO12009P1"/>
    <property type="match status" value="1"/>
</dbReference>
<dbReference type="PANTHER" id="PTHR45663:SF11">
    <property type="entry name" value="GEO12009P1"/>
    <property type="match status" value="1"/>
</dbReference>
<dbReference type="Pfam" id="PF00085">
    <property type="entry name" value="Thioredoxin"/>
    <property type="match status" value="1"/>
</dbReference>
<dbReference type="SUPFAM" id="SSF52833">
    <property type="entry name" value="Thioredoxin-like"/>
    <property type="match status" value="1"/>
</dbReference>
<dbReference type="PROSITE" id="PS51352">
    <property type="entry name" value="THIOREDOXIN_2"/>
    <property type="match status" value="1"/>
</dbReference>
<feature type="signal peptide" evidence="3">
    <location>
        <begin position="1"/>
        <end position="22"/>
    </location>
</feature>
<feature type="chain" id="PRO_5021193043" description="Thioredoxin 2" evidence="3">
    <location>
        <begin position="23"/>
        <end position="157"/>
    </location>
</feature>
<feature type="domain" description="Thioredoxin" evidence="4">
    <location>
        <begin position="46"/>
        <end position="157"/>
    </location>
</feature>
<feature type="active site" description="Nucleophile" evidence="1">
    <location>
        <position position="82"/>
    </location>
</feature>
<feature type="active site" description="Nucleophile" evidence="1">
    <location>
        <position position="85"/>
    </location>
</feature>
<feature type="disulfide bond" description="Redox-active" evidence="4">
    <location>
        <begin position="82"/>
        <end position="85"/>
    </location>
</feature>
<keyword id="KW-1015">Disulfide bond</keyword>
<keyword id="KW-0249">Electron transport</keyword>
<keyword id="KW-0676">Redox-active center</keyword>
<keyword id="KW-1185">Reference proteome</keyword>
<keyword id="KW-0732">Signal</keyword>
<keyword id="KW-0813">Transport</keyword>
<accession>A0A509AQW5</accession>
<evidence type="ECO:0000250" key="1">
    <source>
        <dbReference type="UniProtKB" id="P10599"/>
    </source>
</evidence>
<evidence type="ECO:0000250" key="2">
    <source>
        <dbReference type="UniProtKB" id="Q8IDP4"/>
    </source>
</evidence>
<evidence type="ECO:0000255" key="3"/>
<evidence type="ECO:0000255" key="4">
    <source>
        <dbReference type="PROSITE-ProRule" id="PRU00691"/>
    </source>
</evidence>
<evidence type="ECO:0000269" key="5">
    <source>
    </source>
</evidence>
<evidence type="ECO:0000269" key="6">
    <source>
    </source>
</evidence>
<evidence type="ECO:0000269" key="7">
    <source>
    </source>
</evidence>
<evidence type="ECO:0000303" key="8">
    <source>
    </source>
</evidence>
<evidence type="ECO:0000303" key="9">
    <source>
    </source>
</evidence>
<evidence type="ECO:0000305" key="10"/>
<evidence type="ECO:0000312" key="11">
    <source>
        <dbReference type="EMBL" id="VUC57967.1"/>
    </source>
</evidence>
<evidence type="ECO:0000312" key="12">
    <source>
        <dbReference type="Proteomes" id="UP000074855"/>
    </source>
</evidence>
<sequence>MKHILALVVFIISFFCFKDVNCIKDFQLSPIESPLTALNKYDKFFLRMYNKMPRLEQSSTDYINGINMKNTIFVLYFYAKWCHACKLQGPELDKLEKNFGKKVHIIRIDIDNNEEIAKKNFIKALPTTIIIKNKVILAKNEHFVTSNELTSTIRKHL</sequence>
<name>THIO2_PLABA</name>
<gene>
    <name evidence="8" type="primary">TRX2</name>
    <name evidence="11" type="ORF">PBANKA_1358000</name>
</gene>
<organism evidence="12">
    <name type="scientific">Plasmodium berghei (strain Anka)</name>
    <dbReference type="NCBI Taxonomy" id="5823"/>
    <lineage>
        <taxon>Eukaryota</taxon>
        <taxon>Sar</taxon>
        <taxon>Alveolata</taxon>
        <taxon>Apicomplexa</taxon>
        <taxon>Aconoidasida</taxon>
        <taxon>Haemosporida</taxon>
        <taxon>Plasmodiidae</taxon>
        <taxon>Plasmodium</taxon>
        <taxon>Plasmodium (Vinckeia)</taxon>
    </lineage>
</organism>
<reference evidence="12" key="1">
    <citation type="journal article" date="2014" name="BMC Biol.">
        <title>A comprehensive evaluation of rodent malaria parasite genomes and gene expression.</title>
        <authorList>
            <person name="Otto T.D."/>
            <person name="Bohme U."/>
            <person name="Jackson A.P."/>
            <person name="Hunt M."/>
            <person name="Franke-Fayard B."/>
            <person name="Hoeijmakers W.A."/>
            <person name="Religa A.A."/>
            <person name="Robertson L."/>
            <person name="Sanders M."/>
            <person name="Ogun S.A."/>
            <person name="Cunningham D."/>
            <person name="Erhart A."/>
            <person name="Billker O."/>
            <person name="Khan S.M."/>
            <person name="Stunnenberg H.G."/>
            <person name="Langhorne J."/>
            <person name="Holder A.A."/>
            <person name="Waters A.P."/>
            <person name="Newbold C.I."/>
            <person name="Pain A."/>
            <person name="Berriman M."/>
            <person name="Janse C.J."/>
        </authorList>
    </citation>
    <scope>NUCLEOTIDE SEQUENCE [LARGE SCALE GENOMIC DNA]</scope>
    <source>
        <strain evidence="12">ANKA</strain>
    </source>
</reference>
<reference evidence="10" key="2">
    <citation type="journal article" date="2013" name="Mol. Microbiol.">
        <title>The Plasmodium translocon of exported proteins (PTEX) component thioredoxin-2 is important for maintaining normal blood-stage growth.</title>
        <authorList>
            <person name="Matthews K."/>
            <person name="Kalanon M."/>
            <person name="Chisholm S.A."/>
            <person name="Sturm A."/>
            <person name="Goodman C.D."/>
            <person name="Dixon M.W."/>
            <person name="Sanders P.R."/>
            <person name="Nebl T."/>
            <person name="Fraser F."/>
            <person name="Haase S."/>
            <person name="McFadden G.I."/>
            <person name="Gilson P.R."/>
            <person name="Crabb B.S."/>
            <person name="de Koning-Ward T.F."/>
        </authorList>
    </citation>
    <scope>FUNCTION</scope>
    <scope>IDENTIFICATION IN THE PTEX COMPLEX</scope>
    <scope>DISRUPTION PHENOTYPE</scope>
</reference>
<reference evidence="10" key="3">
    <citation type="journal article" date="2014" name="Nature">
        <title>PTEX is an essential nexus for protein export in malaria parasites.</title>
        <authorList>
            <person name="Elsworth B."/>
            <person name="Matthews K."/>
            <person name="Nie C.Q."/>
            <person name="Kalanon M."/>
            <person name="Charnaud S.C."/>
            <person name="Sanders P.R."/>
            <person name="Chisholm S.A."/>
            <person name="Counihan N.A."/>
            <person name="Shaw P.J."/>
            <person name="Pino P."/>
            <person name="Chan J.A."/>
            <person name="Azevedo M.F."/>
            <person name="Rogerson S.J."/>
            <person name="Beeson J.G."/>
            <person name="Crabb B.S."/>
            <person name="Gilson P.R."/>
            <person name="de Koning-Ward T.F."/>
        </authorList>
    </citation>
    <scope>FUNCTION</scope>
    <scope>DISRUPTION PHENOTYPE</scope>
</reference>
<reference evidence="10" key="4">
    <citation type="journal article" date="2015" name="Eukaryot. Cell">
        <title>In Vivo Function of PTEX88 in Malaria Parasite Sequestration and Virulence.</title>
        <authorList>
            <person name="Matz J.M."/>
            <person name="Ingmundson A."/>
            <person name="Costa Nunes J."/>
            <person name="Stenzel W."/>
            <person name="Matuschewski K."/>
            <person name="Kooij T.W."/>
        </authorList>
    </citation>
    <scope>DISRUPTION PHENOTYPE</scope>
</reference>
<comment type="function">
    <text evidence="2 5 6 9">Participates in various redox reactions through the reversible oxidation of its active center dithiol to a disulfide and catalyzes dithiol-disulfide exchange reactions (By similarity). As part of the translocon PTEX complex, plays a role in the export of parasite proteins into the host erythrocyte (PubMed:25043043). The translocon PTEX complex is a multi-protein machinery resident in the parasite parasitophorous vacuolar membrane, responsible for protein secretion into host cells (PubMed:23869529, PubMed:25043043). May contribute to the unfolding of proteins containing the PEXEL localization motif before their passage through the translocon or regulate the PTEX complex function (PubMed:25043043).</text>
</comment>
<comment type="subunit">
    <text evidence="2 5">Monomer (By similarity). Component of the translocon PTEX complex composed of HSP101, EXP2, PTEX150, PTEX88 and TRX2 (PubMed:23869529).</text>
</comment>
<comment type="PTM">
    <text evidence="2">The disulfide bond between Cys-82 and Cys-85 acts as a redox-active center and is reduced by thioredoxin reductase TRXR.</text>
</comment>
<comment type="disruption phenotype">
    <text evidence="5 6 7">Mice of infection with knockout parasites have reduced blood parasitemia due to a slower growth at the ring and schizont stages (PubMed:23869529). Parasite burden in vessels of lung and adipose tissue is reduced (PubMed:25820521). Also, the development of experimental cerebral malaria is delayed (PubMed:23869529, PubMed:25820521). In infected host erythrocytes, surface expression of parasite antigens is reduced (PubMed:25043043).</text>
</comment>
<comment type="similarity">
    <text evidence="10">Belongs to the thioredoxin family.</text>
</comment>